<feature type="chain" id="PRO_0000389496" description="Cyclic di-AMP synthase CdaS">
    <location>
        <begin position="1"/>
        <end position="207"/>
    </location>
</feature>
<feature type="domain" description="DAC" evidence="2">
    <location>
        <begin position="63"/>
        <end position="205"/>
    </location>
</feature>
<feature type="coiled-coil region" evidence="12">
    <location>
        <begin position="13"/>
        <end position="37"/>
    </location>
</feature>
<feature type="mutagenesis site" description="17-fold increased production of c-di-AMP in E.coli." evidence="6">
    <location>
        <begin position="1"/>
        <end position="69"/>
    </location>
</feature>
<feature type="mutagenesis site" description="20-fold increased production of c-di-AMP in E.coli, forms only homodimers." evidence="6">
    <location>
        <begin position="1"/>
        <end position="39"/>
    </location>
</feature>
<feature type="mutagenesis site" description="Suppresses a triple DAC mutant." evidence="6">
    <original>Q</original>
    <variation>K</variation>
    <location>
        <position position="41"/>
    </location>
</feature>
<feature type="mutagenesis site" description="Suppresses a triple DAC mutant, 90-fold increased production of c-di-AMP in E.coli." evidence="5 6">
    <original>L</original>
    <variation>F</variation>
    <location>
        <position position="44"/>
    </location>
</feature>
<feature type="mutagenesis site" description="Suppresses a triple DAC mutant, 20-fold increased production of c-di-AMP in E.coli." evidence="6">
    <original>E</original>
    <variation>K</variation>
    <location>
        <position position="46"/>
    </location>
</feature>
<feature type="mutagenesis site" description="Suppresses a triple DAC mutant, 10-fold increased production of c-di-AMP in E.coli, forms hexamers." evidence="6">
    <original>A</original>
    <variation>V</variation>
    <location>
        <position position="61"/>
    </location>
</feature>
<feature type="mutagenesis site" description="Suppresses a triple DAC mutant, 4-fold increased production of c-di-AMP in E.coli." evidence="6">
    <original>A</original>
    <variation>V</variation>
    <location>
        <position position="76"/>
    </location>
</feature>
<feature type="mutagenesis site" description="Suppresses a triple DAC mutant, 12-fold increased production of c-di-AMP in E.coli." evidence="6">
    <original>P</original>
    <variation>Q</variation>
    <location>
        <position position="201"/>
    </location>
</feature>
<feature type="sequence conflict" description="In Ref. 1; AAC17858." evidence="9" ref="1">
    <original>A</original>
    <variation>S</variation>
    <location>
        <position position="149"/>
    </location>
</feature>
<accession>O31854</accession>
<accession>Q7BV95</accession>
<reference key="1">
    <citation type="submission" date="1997-09" db="EMBL/GenBank/DDBJ databases">
        <title>DNA sequences of a 15.4 kb fragment covering the 181 degree region of the Bacillus subtilis genome.</title>
        <authorList>
            <person name="Park S.-H."/>
            <person name="Shin B.-S."/>
            <person name="Choi S.-K."/>
            <person name="Ghim S.-Y."/>
        </authorList>
    </citation>
    <scope>NUCLEOTIDE SEQUENCE [GENOMIC DNA]</scope>
    <source>
        <strain>168</strain>
    </source>
</reference>
<reference key="2">
    <citation type="journal article" date="1997" name="Nature">
        <title>The complete genome sequence of the Gram-positive bacterium Bacillus subtilis.</title>
        <authorList>
            <person name="Kunst F."/>
            <person name="Ogasawara N."/>
            <person name="Moszer I."/>
            <person name="Albertini A.M."/>
            <person name="Alloni G."/>
            <person name="Azevedo V."/>
            <person name="Bertero M.G."/>
            <person name="Bessieres P."/>
            <person name="Bolotin A."/>
            <person name="Borchert S."/>
            <person name="Borriss R."/>
            <person name="Boursier L."/>
            <person name="Brans A."/>
            <person name="Braun M."/>
            <person name="Brignell S.C."/>
            <person name="Bron S."/>
            <person name="Brouillet S."/>
            <person name="Bruschi C.V."/>
            <person name="Caldwell B."/>
            <person name="Capuano V."/>
            <person name="Carter N.M."/>
            <person name="Choi S.-K."/>
            <person name="Codani J.-J."/>
            <person name="Connerton I.F."/>
            <person name="Cummings N.J."/>
            <person name="Daniel R.A."/>
            <person name="Denizot F."/>
            <person name="Devine K.M."/>
            <person name="Duesterhoeft A."/>
            <person name="Ehrlich S.D."/>
            <person name="Emmerson P.T."/>
            <person name="Entian K.-D."/>
            <person name="Errington J."/>
            <person name="Fabret C."/>
            <person name="Ferrari E."/>
            <person name="Foulger D."/>
            <person name="Fritz C."/>
            <person name="Fujita M."/>
            <person name="Fujita Y."/>
            <person name="Fuma S."/>
            <person name="Galizzi A."/>
            <person name="Galleron N."/>
            <person name="Ghim S.-Y."/>
            <person name="Glaser P."/>
            <person name="Goffeau A."/>
            <person name="Golightly E.J."/>
            <person name="Grandi G."/>
            <person name="Guiseppi G."/>
            <person name="Guy B.J."/>
            <person name="Haga K."/>
            <person name="Haiech J."/>
            <person name="Harwood C.R."/>
            <person name="Henaut A."/>
            <person name="Hilbert H."/>
            <person name="Holsappel S."/>
            <person name="Hosono S."/>
            <person name="Hullo M.-F."/>
            <person name="Itaya M."/>
            <person name="Jones L.-M."/>
            <person name="Joris B."/>
            <person name="Karamata D."/>
            <person name="Kasahara Y."/>
            <person name="Klaerr-Blanchard M."/>
            <person name="Klein C."/>
            <person name="Kobayashi Y."/>
            <person name="Koetter P."/>
            <person name="Koningstein G."/>
            <person name="Krogh S."/>
            <person name="Kumano M."/>
            <person name="Kurita K."/>
            <person name="Lapidus A."/>
            <person name="Lardinois S."/>
            <person name="Lauber J."/>
            <person name="Lazarevic V."/>
            <person name="Lee S.-M."/>
            <person name="Levine A."/>
            <person name="Liu H."/>
            <person name="Masuda S."/>
            <person name="Mauel C."/>
            <person name="Medigue C."/>
            <person name="Medina N."/>
            <person name="Mellado R.P."/>
            <person name="Mizuno M."/>
            <person name="Moestl D."/>
            <person name="Nakai S."/>
            <person name="Noback M."/>
            <person name="Noone D."/>
            <person name="O'Reilly M."/>
            <person name="Ogawa K."/>
            <person name="Ogiwara A."/>
            <person name="Oudega B."/>
            <person name="Park S.-H."/>
            <person name="Parro V."/>
            <person name="Pohl T.M."/>
            <person name="Portetelle D."/>
            <person name="Porwollik S."/>
            <person name="Prescott A.M."/>
            <person name="Presecan E."/>
            <person name="Pujic P."/>
            <person name="Purnelle B."/>
            <person name="Rapoport G."/>
            <person name="Rey M."/>
            <person name="Reynolds S."/>
            <person name="Rieger M."/>
            <person name="Rivolta C."/>
            <person name="Rocha E."/>
            <person name="Roche B."/>
            <person name="Rose M."/>
            <person name="Sadaie Y."/>
            <person name="Sato T."/>
            <person name="Scanlan E."/>
            <person name="Schleich S."/>
            <person name="Schroeter R."/>
            <person name="Scoffone F."/>
            <person name="Sekiguchi J."/>
            <person name="Sekowska A."/>
            <person name="Seror S.J."/>
            <person name="Serror P."/>
            <person name="Shin B.-S."/>
            <person name="Soldo B."/>
            <person name="Sorokin A."/>
            <person name="Tacconi E."/>
            <person name="Takagi T."/>
            <person name="Takahashi H."/>
            <person name="Takemaru K."/>
            <person name="Takeuchi M."/>
            <person name="Tamakoshi A."/>
            <person name="Tanaka T."/>
            <person name="Terpstra P."/>
            <person name="Tognoni A."/>
            <person name="Tosato V."/>
            <person name="Uchiyama S."/>
            <person name="Vandenbol M."/>
            <person name="Vannier F."/>
            <person name="Vassarotti A."/>
            <person name="Viari A."/>
            <person name="Wambutt R."/>
            <person name="Wedler E."/>
            <person name="Wedler H."/>
            <person name="Weitzenegger T."/>
            <person name="Winters P."/>
            <person name="Wipat A."/>
            <person name="Yamamoto H."/>
            <person name="Yamane K."/>
            <person name="Yasumoto K."/>
            <person name="Yata K."/>
            <person name="Yoshida K."/>
            <person name="Yoshikawa H.-F."/>
            <person name="Zumstein E."/>
            <person name="Yoshikawa H."/>
            <person name="Danchin A."/>
        </authorList>
    </citation>
    <scope>NUCLEOTIDE SEQUENCE [LARGE SCALE GENOMIC DNA]</scope>
    <source>
        <strain>168</strain>
    </source>
</reference>
<reference key="3">
    <citation type="journal article" date="2009" name="Microbiology">
        <title>From a consortium sequence to a unified sequence: the Bacillus subtilis 168 reference genome a decade later.</title>
        <authorList>
            <person name="Barbe V."/>
            <person name="Cruveiller S."/>
            <person name="Kunst F."/>
            <person name="Lenoble P."/>
            <person name="Meurice G."/>
            <person name="Sekowska A."/>
            <person name="Vallenet D."/>
            <person name="Wang T."/>
            <person name="Moszer I."/>
            <person name="Medigue C."/>
            <person name="Danchin A."/>
        </authorList>
    </citation>
    <scope>SEQUENCE REVISION TO C-TERMINUS</scope>
</reference>
<reference key="4">
    <citation type="journal article" date="2012" name="Mol. Microbiol.">
        <title>Analysis of the role of Bacillus subtilis sigma(M) in beta-lactam resistance reveals an essential role for c-di-AMP in peptidoglycan homeostasis.</title>
        <authorList>
            <person name="Luo Y."/>
            <person name="Helmann J.D."/>
        </authorList>
    </citation>
    <scope>PROBABLE FUNCTION</scope>
    <scope>DISRUPTION PHENOTYPE</scope>
    <source>
        <strain>168</strain>
    </source>
</reference>
<reference key="5">
    <citation type="journal article" date="2012" name="Science">
        <title>Condition-dependent transcriptome reveals high-level regulatory architecture in Bacillus subtilis.</title>
        <authorList>
            <person name="Nicolas P."/>
            <person name="Maeder U."/>
            <person name="Dervyn E."/>
            <person name="Rochat T."/>
            <person name="Leduc A."/>
            <person name="Pigeonneau N."/>
            <person name="Bidnenko E."/>
            <person name="Marchadier E."/>
            <person name="Hoebeke M."/>
            <person name="Aymerich S."/>
            <person name="Becher D."/>
            <person name="Bisicchia P."/>
            <person name="Botella E."/>
            <person name="Delumeau O."/>
            <person name="Doherty G."/>
            <person name="Denham E.L."/>
            <person name="Fogg M.J."/>
            <person name="Fromion V."/>
            <person name="Goelzer A."/>
            <person name="Hansen A."/>
            <person name="Haertig E."/>
            <person name="Harwood C.R."/>
            <person name="Homuth G."/>
            <person name="Jarmer H."/>
            <person name="Jules M."/>
            <person name="Klipp E."/>
            <person name="Le Chat L."/>
            <person name="Lecointe F."/>
            <person name="Lewis P."/>
            <person name="Liebermeister W."/>
            <person name="March A."/>
            <person name="Mars R.A."/>
            <person name="Nannapaneni P."/>
            <person name="Noone D."/>
            <person name="Pohl S."/>
            <person name="Rinn B."/>
            <person name="Ruegheimer F."/>
            <person name="Sappa P.K."/>
            <person name="Samson F."/>
            <person name="Schaffer M."/>
            <person name="Schwikowski B."/>
            <person name="Steil L."/>
            <person name="Stuelke J."/>
            <person name="Wiegert T."/>
            <person name="Devine K.M."/>
            <person name="Wilkinson A.J."/>
            <person name="van Dijl J.M."/>
            <person name="Hecker M."/>
            <person name="Voelker U."/>
            <person name="Bessieres P."/>
            <person name="Noirot P."/>
        </authorList>
    </citation>
    <scope>DEVELOPMENTAL STAGE</scope>
    <scope>INDUCTION</scope>
</reference>
<reference key="6">
    <citation type="journal article" date="2013" name="J. Biol. Chem.">
        <title>Cyclic di-AMP homeostasis in Bacillus subtilis: both lack and high level accumulation of the nucleotide are detrimental for cell growth.</title>
        <authorList>
            <person name="Mehne F.M."/>
            <person name="Gunka K."/>
            <person name="Eilers H."/>
            <person name="Herzberg C."/>
            <person name="Kaever V."/>
            <person name="Stuelke J."/>
        </authorList>
    </citation>
    <scope>FUNCTION</scope>
    <scope>DISRUPTION PHENOTYPE</scope>
    <scope>MUTAGENESIS OF LEU-44</scope>
    <source>
        <strain>168</strain>
    </source>
</reference>
<reference key="7">
    <citation type="journal article" date="2014" name="J. Biol. Chem.">
        <title>Control of the diadenylate cyclase CdaS in Bacillus subtilis: an autoinhibitory domain limits cyclic di-AMP production.</title>
        <authorList>
            <person name="Mehne F.M."/>
            <person name="Schroeder-Tittmann K."/>
            <person name="Eijlander R.T."/>
            <person name="Herzberg C."/>
            <person name="Hewitt L."/>
            <person name="Kaever V."/>
            <person name="Lewis R.J."/>
            <person name="Kuipers O.P."/>
            <person name="Tittmann K."/>
            <person name="Stuelke J."/>
        </authorList>
    </citation>
    <scope>FUNCTION</scope>
    <scope>SUBUNIT</scope>
    <scope>DOMAIN</scope>
    <scope>MUTAGENESIS OF 1-MET--LYS-39; 1-MET--TYR-69; GLN-41; LEU-44; GLU-46; ALA-61; ALA-76 AND PRO-201</scope>
    <source>
        <strain>168</strain>
    </source>
</reference>
<gene>
    <name evidence="8" type="primary">cdaS</name>
    <name type="synonym">dacB</name>
    <name type="synonym">yojJ</name>
    <name type="ordered locus">BSU19430</name>
</gene>
<dbReference type="EC" id="2.7.7.85" evidence="2"/>
<dbReference type="EMBL" id="AF026147">
    <property type="protein sequence ID" value="AAC17858.1"/>
    <property type="status" value="ALT_SEQ"/>
    <property type="molecule type" value="Genomic_DNA"/>
</dbReference>
<dbReference type="EMBL" id="AL009126">
    <property type="protein sequence ID" value="CAB13835.3"/>
    <property type="molecule type" value="Genomic_DNA"/>
</dbReference>
<dbReference type="RefSeq" id="NP_389825.3">
    <property type="nucleotide sequence ID" value="NC_000964.3"/>
</dbReference>
<dbReference type="RefSeq" id="WP_010886531.1">
    <property type="nucleotide sequence ID" value="NZ_OZ025638.1"/>
</dbReference>
<dbReference type="SMR" id="O31854"/>
<dbReference type="FunCoup" id="O31854">
    <property type="interactions" value="6"/>
</dbReference>
<dbReference type="STRING" id="224308.BSU19430"/>
<dbReference type="PaxDb" id="224308-BSU19430"/>
<dbReference type="EnsemblBacteria" id="CAB13835">
    <property type="protein sequence ID" value="CAB13835"/>
    <property type="gene ID" value="BSU_19430"/>
</dbReference>
<dbReference type="GeneID" id="939589"/>
<dbReference type="KEGG" id="bsu:BSU19430"/>
<dbReference type="PATRIC" id="fig|224308.43.peg.2059"/>
<dbReference type="eggNOG" id="COG1624">
    <property type="taxonomic scope" value="Bacteria"/>
</dbReference>
<dbReference type="InParanoid" id="O31854"/>
<dbReference type="OrthoDB" id="9807385at2"/>
<dbReference type="PhylomeDB" id="O31854"/>
<dbReference type="BioCyc" id="BSUB:BSU19430-MONOMER"/>
<dbReference type="BRENDA" id="2.7.7.85">
    <property type="organism ID" value="658"/>
</dbReference>
<dbReference type="Proteomes" id="UP000001570">
    <property type="component" value="Chromosome"/>
</dbReference>
<dbReference type="GO" id="GO:0004016">
    <property type="term" value="F:adenylate cyclase activity"/>
    <property type="evidence" value="ECO:0000314"/>
    <property type="project" value="UniProtKB"/>
</dbReference>
<dbReference type="GO" id="GO:0005524">
    <property type="term" value="F:ATP binding"/>
    <property type="evidence" value="ECO:0007669"/>
    <property type="project" value="UniProtKB-UniRule"/>
</dbReference>
<dbReference type="GO" id="GO:0106408">
    <property type="term" value="F:diadenylate cyclase activity"/>
    <property type="evidence" value="ECO:0007669"/>
    <property type="project" value="UniProtKB-EC"/>
</dbReference>
<dbReference type="GO" id="GO:0006171">
    <property type="term" value="P:cAMP biosynthetic process"/>
    <property type="evidence" value="ECO:0007669"/>
    <property type="project" value="InterPro"/>
</dbReference>
<dbReference type="Gene3D" id="3.40.1700.10">
    <property type="entry name" value="DNA integrity scanning protein, DisA, N-terminal domain"/>
    <property type="match status" value="1"/>
</dbReference>
<dbReference type="Gene3D" id="1.10.287.770">
    <property type="entry name" value="YojJ-like"/>
    <property type="match status" value="1"/>
</dbReference>
<dbReference type="HAMAP" id="MF_00838">
    <property type="entry name" value="DacB"/>
    <property type="match status" value="1"/>
</dbReference>
<dbReference type="InterPro" id="IPR014046">
    <property type="entry name" value="C-di-AMP_synthase"/>
</dbReference>
<dbReference type="InterPro" id="IPR034693">
    <property type="entry name" value="CdaS"/>
</dbReference>
<dbReference type="InterPro" id="IPR019457">
    <property type="entry name" value="CdaS_N"/>
</dbReference>
<dbReference type="InterPro" id="IPR053472">
    <property type="entry name" value="DAC_CdaS-like"/>
</dbReference>
<dbReference type="InterPro" id="IPR050338">
    <property type="entry name" value="DisA"/>
</dbReference>
<dbReference type="InterPro" id="IPR036888">
    <property type="entry name" value="DNA_integrity_DisA_N_sf"/>
</dbReference>
<dbReference type="InterPro" id="IPR003390">
    <property type="entry name" value="DNA_integrity_scan_DisA_N"/>
</dbReference>
<dbReference type="NCBIfam" id="NF038328">
    <property type="entry name" value="c-di-AMP_CdaS"/>
    <property type="match status" value="1"/>
</dbReference>
<dbReference type="PANTHER" id="PTHR34185:SF2">
    <property type="entry name" value="CYCLIC DI-AMP SYNTHASE CDAS"/>
    <property type="match status" value="1"/>
</dbReference>
<dbReference type="PANTHER" id="PTHR34185">
    <property type="entry name" value="DIADENYLATE CYCLASE"/>
    <property type="match status" value="1"/>
</dbReference>
<dbReference type="Pfam" id="PF10372">
    <property type="entry name" value="CdaS_N"/>
    <property type="match status" value="1"/>
</dbReference>
<dbReference type="Pfam" id="PF02457">
    <property type="entry name" value="DAC"/>
    <property type="match status" value="1"/>
</dbReference>
<dbReference type="PIRSF" id="PIRSF004793">
    <property type="entry name" value="UCP004793"/>
    <property type="match status" value="1"/>
</dbReference>
<dbReference type="SUPFAM" id="SSF143597">
    <property type="entry name" value="YojJ-like"/>
    <property type="match status" value="1"/>
</dbReference>
<dbReference type="PROSITE" id="PS51794">
    <property type="entry name" value="DAC"/>
    <property type="match status" value="1"/>
</dbReference>
<name>CDAS_BACSU</name>
<proteinExistence type="evidence at protein level"/>
<organism>
    <name type="scientific">Bacillus subtilis (strain 168)</name>
    <dbReference type="NCBI Taxonomy" id="224308"/>
    <lineage>
        <taxon>Bacteria</taxon>
        <taxon>Bacillati</taxon>
        <taxon>Bacillota</taxon>
        <taxon>Bacilli</taxon>
        <taxon>Bacillales</taxon>
        <taxon>Bacillaceae</taxon>
        <taxon>Bacillus</taxon>
    </lineage>
</organism>
<comment type="function">
    <text evidence="5 6 9 10">One of 3 paralogous diadenylate cyclases (DAC) in this bacteria, catalyzing the condensation of 2 ATP molecules into cyclic di-AMP (c-di-AMP) (Probable). Upon expression in E.coli leads to c-di-AMP synthesis (PubMed:23192352, PubMed:24939848). Overexpression of the hyperactive mutant (L44F) in the absence of c-di-AMP phosphodiesterase GdpP leads to growth defects in log phase (long curly cell filaments) that disappear upon sporulation; spore formation is normal, showing sporulation is insensitive to the excess c-di-AMP (PubMed:23192352). In B.subtilis c-di-AMP is a second messenger that mediates growth, DNA repair and cell wall homeostasis; it is toxic when present in excess.</text>
</comment>
<comment type="catalytic activity">
    <reaction evidence="2">
        <text>2 ATP = 3',3'-c-di-AMP + 2 diphosphate</text>
        <dbReference type="Rhea" id="RHEA:35655"/>
        <dbReference type="ChEBI" id="CHEBI:30616"/>
        <dbReference type="ChEBI" id="CHEBI:33019"/>
        <dbReference type="ChEBI" id="CHEBI:71500"/>
        <dbReference type="EC" id="2.7.7.85"/>
    </reaction>
</comment>
<comment type="subunit">
    <text evidence="1 6">Forms dimers and probably also hexamers; the dimer may be active while the hexamer may not be active.</text>
</comment>
<comment type="developmental stage">
    <text evidence="11">Probably expressed only during sporulation in the forespore.</text>
</comment>
<comment type="induction">
    <text evidence="4">Expressed under control of the sigma-G factor in the forespore.</text>
</comment>
<comment type="domain">
    <text evidence="6">The N-terminus (residues 1-69) is thought to form 2 alpha-helices that allow dimerization and probable hexamerization; this region inhibits DAC activity of the rest of the protein (PubMed:24939848).</text>
</comment>
<comment type="disruption phenotype">
    <text evidence="3 5 6">No effect on antibiotic sensitivity to the beta-lactam antibiotic cefuroxime (CEF), upon overexpression of the c-di-AMP phosphodiesterase GdpP increased sensitivity to CEF (PubMed:22211522). Double disA-cdaA mutants cannot be made, suggesting they are lethal, while double disA-cdaS and cdaA-cdsS mutants are viable (PubMed:22211522, PubMed:23192352). In single deletions of this gene, germination efficiency is decreased (PubMed:24939848).</text>
</comment>
<comment type="similarity">
    <text evidence="2">Belongs to the adenylate cyclase family. DacB/CdaS subfamily.</text>
</comment>
<comment type="sequence caution" evidence="9">
    <conflict type="erroneous initiation">
        <sequence resource="EMBL-CDS" id="AAC17858"/>
    </conflict>
    <text>Truncated N-terminus.</text>
</comment>
<comment type="sequence caution" evidence="9">
    <conflict type="frameshift">
        <sequence resource="EMBL-CDS" id="AAC17858"/>
    </conflict>
</comment>
<keyword id="KW-0067">ATP-binding</keyword>
<keyword id="KW-0175">Coiled coil</keyword>
<keyword id="KW-0547">Nucleotide-binding</keyword>
<keyword id="KW-0548">Nucleotidyltransferase</keyword>
<keyword id="KW-1185">Reference proteome</keyword>
<keyword id="KW-0808">Transferase</keyword>
<protein>
    <recommendedName>
        <fullName evidence="7">Cyclic di-AMP synthase CdaS</fullName>
        <shortName>c-di-AMP synthase</shortName>
        <ecNumber evidence="2">2.7.7.85</ecNumber>
    </recommendedName>
    <alternativeName>
        <fullName evidence="2">Diadenylate cyclase</fullName>
        <shortName evidence="2">DAC</shortName>
    </alternativeName>
</protein>
<evidence type="ECO:0000250" key="1">
    <source>
        <dbReference type="UniProtKB" id="Q812L9"/>
    </source>
</evidence>
<evidence type="ECO:0000255" key="2">
    <source>
        <dbReference type="HAMAP-Rule" id="MF_00838"/>
    </source>
</evidence>
<evidence type="ECO:0000269" key="3">
    <source>
    </source>
</evidence>
<evidence type="ECO:0000269" key="4">
    <source>
    </source>
</evidence>
<evidence type="ECO:0000269" key="5">
    <source>
    </source>
</evidence>
<evidence type="ECO:0000269" key="6">
    <source>
    </source>
</evidence>
<evidence type="ECO:0000303" key="7">
    <source>
    </source>
</evidence>
<evidence type="ECO:0000303" key="8">
    <source>
    </source>
</evidence>
<evidence type="ECO:0000305" key="9"/>
<evidence type="ECO:0000305" key="10">
    <source>
    </source>
</evidence>
<evidence type="ECO:0000305" key="11">
    <source>
    </source>
</evidence>
<evidence type="ECO:0000305" key="12">
    <source>
    </source>
</evidence>
<sequence>MKAMRYEQISENAFKGKIQVYLEQILGDASLILKTLHEKDQCLLCELDDLGHVFQDMQGIASSFYLQSYIEEFTPAFIELAKAIKALSEHKHGALIVIERADPVERFIQKGTSLHAEISSSLIESIFFPGNPLHDGALLVRENKLVSAANVLPLTTKEVDIHLGTRHRAALGMSGYTDALVLVVSEETGKMSFAKDGVLYPLISPRT</sequence>